<sequence length="332" mass="36573">MKINLDRTSSGFCIGVQGTIHVAEEKLAQSGELYCLGDVVHNEVEVKRLEALGMETIDIPAFEELRNAEVLIRAHGEPPSTYETARKNNLAITDTTCPVVAKLQRTAKMLHQLGYQVVIYGKKVHPEVIGINGQCDDEGVVIKHPDLSDPEEIAPLDLSRKTALISQTTMDVPGFYELKRNLEKLFAEHGHRNPGTQSGEWMAVRDIDITAEKTGALAMPKLVFKDTICRQVSSRNGKLRDFALANDCIVFAAGRKSSNGQVLYSICKDANPHSYFIEDVDEIRPEWFVGENGKPVESVGICGATSTPMWLLEKVANYIDKTFGDGSSNPNA</sequence>
<reference key="1">
    <citation type="journal article" date="2002" name="Proc. Natl. Acad. Sci. U.S.A.">
        <title>The complete genome sequence of Chlorobium tepidum TLS, a photosynthetic, anaerobic, green-sulfur bacterium.</title>
        <authorList>
            <person name="Eisen J.A."/>
            <person name="Nelson K.E."/>
            <person name="Paulsen I.T."/>
            <person name="Heidelberg J.F."/>
            <person name="Wu M."/>
            <person name="Dodson R.J."/>
            <person name="DeBoy R.T."/>
            <person name="Gwinn M.L."/>
            <person name="Nelson W.C."/>
            <person name="Haft D.H."/>
            <person name="Hickey E.K."/>
            <person name="Peterson J.D."/>
            <person name="Durkin A.S."/>
            <person name="Kolonay J.F."/>
            <person name="Yang F."/>
            <person name="Holt I.E."/>
            <person name="Umayam L.A."/>
            <person name="Mason T.M."/>
            <person name="Brenner M."/>
            <person name="Shea T.P."/>
            <person name="Parksey D.S."/>
            <person name="Nierman W.C."/>
            <person name="Feldblyum T.V."/>
            <person name="Hansen C.L."/>
            <person name="Craven M.B."/>
            <person name="Radune D."/>
            <person name="Vamathevan J.J."/>
            <person name="Khouri H.M."/>
            <person name="White O."/>
            <person name="Gruber T.M."/>
            <person name="Ketchum K.A."/>
            <person name="Venter J.C."/>
            <person name="Tettelin H."/>
            <person name="Bryant D.A."/>
            <person name="Fraser C.M."/>
        </authorList>
    </citation>
    <scope>NUCLEOTIDE SEQUENCE [LARGE SCALE GENOMIC DNA]</scope>
    <source>
        <strain>ATCC 49652 / DSM 12025 / NBRC 103806 / TLS</strain>
    </source>
</reference>
<dbReference type="EC" id="1.17.7.4" evidence="1"/>
<dbReference type="EMBL" id="AE006470">
    <property type="protein sequence ID" value="AAM71529.1"/>
    <property type="molecule type" value="Genomic_DNA"/>
</dbReference>
<dbReference type="RefSeq" id="NP_661187.1">
    <property type="nucleotide sequence ID" value="NC_002932.3"/>
</dbReference>
<dbReference type="RefSeq" id="WP_010931975.1">
    <property type="nucleotide sequence ID" value="NC_002932.3"/>
</dbReference>
<dbReference type="SMR" id="Q8KFN9"/>
<dbReference type="STRING" id="194439.CT0283"/>
<dbReference type="EnsemblBacteria" id="AAM71529">
    <property type="protein sequence ID" value="AAM71529"/>
    <property type="gene ID" value="CT0283"/>
</dbReference>
<dbReference type="KEGG" id="cte:CT0283"/>
<dbReference type="PATRIC" id="fig|194439.7.peg.275"/>
<dbReference type="eggNOG" id="COG0761">
    <property type="taxonomic scope" value="Bacteria"/>
</dbReference>
<dbReference type="HOGENOM" id="CLU_027486_0_1_10"/>
<dbReference type="OrthoDB" id="9777362at2"/>
<dbReference type="UniPathway" id="UPA00056">
    <property type="reaction ID" value="UER00097"/>
</dbReference>
<dbReference type="UniPathway" id="UPA00059">
    <property type="reaction ID" value="UER00105"/>
</dbReference>
<dbReference type="Proteomes" id="UP000001007">
    <property type="component" value="Chromosome"/>
</dbReference>
<dbReference type="GO" id="GO:0051539">
    <property type="term" value="F:4 iron, 4 sulfur cluster binding"/>
    <property type="evidence" value="ECO:0007669"/>
    <property type="project" value="UniProtKB-UniRule"/>
</dbReference>
<dbReference type="GO" id="GO:0051745">
    <property type="term" value="F:4-hydroxy-3-methylbut-2-enyl diphosphate reductase activity"/>
    <property type="evidence" value="ECO:0007669"/>
    <property type="project" value="UniProtKB-UniRule"/>
</dbReference>
<dbReference type="GO" id="GO:0046872">
    <property type="term" value="F:metal ion binding"/>
    <property type="evidence" value="ECO:0007669"/>
    <property type="project" value="UniProtKB-KW"/>
</dbReference>
<dbReference type="GO" id="GO:0050992">
    <property type="term" value="P:dimethylallyl diphosphate biosynthetic process"/>
    <property type="evidence" value="ECO:0007669"/>
    <property type="project" value="UniProtKB-UniRule"/>
</dbReference>
<dbReference type="GO" id="GO:0019288">
    <property type="term" value="P:isopentenyl diphosphate biosynthetic process, methylerythritol 4-phosphate pathway"/>
    <property type="evidence" value="ECO:0007669"/>
    <property type="project" value="UniProtKB-UniRule"/>
</dbReference>
<dbReference type="GO" id="GO:0016114">
    <property type="term" value="P:terpenoid biosynthetic process"/>
    <property type="evidence" value="ECO:0007669"/>
    <property type="project" value="UniProtKB-UniRule"/>
</dbReference>
<dbReference type="CDD" id="cd13944">
    <property type="entry name" value="lytB_ispH"/>
    <property type="match status" value="1"/>
</dbReference>
<dbReference type="Gene3D" id="3.40.50.11270">
    <property type="match status" value="1"/>
</dbReference>
<dbReference type="Gene3D" id="3.40.1010.20">
    <property type="entry name" value="4-hydroxy-3-methylbut-2-enyl diphosphate reductase, catalytic domain"/>
    <property type="match status" value="2"/>
</dbReference>
<dbReference type="HAMAP" id="MF_00191">
    <property type="entry name" value="IspH"/>
    <property type="match status" value="1"/>
</dbReference>
<dbReference type="InterPro" id="IPR003451">
    <property type="entry name" value="LytB/IspH"/>
</dbReference>
<dbReference type="NCBIfam" id="TIGR00216">
    <property type="entry name" value="ispH_lytB"/>
    <property type="match status" value="1"/>
</dbReference>
<dbReference type="NCBIfam" id="NF002187">
    <property type="entry name" value="PRK01045.1-1"/>
    <property type="match status" value="1"/>
</dbReference>
<dbReference type="PANTHER" id="PTHR30426">
    <property type="entry name" value="4-HYDROXY-3-METHYLBUT-2-ENYL DIPHOSPHATE REDUCTASE"/>
    <property type="match status" value="1"/>
</dbReference>
<dbReference type="PANTHER" id="PTHR30426:SF0">
    <property type="entry name" value="4-HYDROXY-3-METHYLBUT-2-ENYL DIPHOSPHATE REDUCTASE"/>
    <property type="match status" value="1"/>
</dbReference>
<dbReference type="Pfam" id="PF02401">
    <property type="entry name" value="LYTB"/>
    <property type="match status" value="1"/>
</dbReference>
<gene>
    <name evidence="1" type="primary">ispH</name>
    <name type="synonym">lytB</name>
    <name type="ordered locus">CT0283</name>
</gene>
<proteinExistence type="inferred from homology"/>
<keyword id="KW-0004">4Fe-4S</keyword>
<keyword id="KW-0408">Iron</keyword>
<keyword id="KW-0411">Iron-sulfur</keyword>
<keyword id="KW-0414">Isoprene biosynthesis</keyword>
<keyword id="KW-0479">Metal-binding</keyword>
<keyword id="KW-0560">Oxidoreductase</keyword>
<keyword id="KW-1185">Reference proteome</keyword>
<comment type="function">
    <text evidence="1">Catalyzes the conversion of 1-hydroxy-2-methyl-2-(E)-butenyl 4-diphosphate (HMBPP) into a mixture of isopentenyl diphosphate (IPP) and dimethylallyl diphosphate (DMAPP). Acts in the terminal step of the DOXP/MEP pathway for isoprenoid precursor biosynthesis.</text>
</comment>
<comment type="catalytic activity">
    <reaction evidence="1">
        <text>isopentenyl diphosphate + 2 oxidized [2Fe-2S]-[ferredoxin] + H2O = (2E)-4-hydroxy-3-methylbut-2-enyl diphosphate + 2 reduced [2Fe-2S]-[ferredoxin] + 2 H(+)</text>
        <dbReference type="Rhea" id="RHEA:24488"/>
        <dbReference type="Rhea" id="RHEA-COMP:10000"/>
        <dbReference type="Rhea" id="RHEA-COMP:10001"/>
        <dbReference type="ChEBI" id="CHEBI:15377"/>
        <dbReference type="ChEBI" id="CHEBI:15378"/>
        <dbReference type="ChEBI" id="CHEBI:33737"/>
        <dbReference type="ChEBI" id="CHEBI:33738"/>
        <dbReference type="ChEBI" id="CHEBI:128753"/>
        <dbReference type="ChEBI" id="CHEBI:128769"/>
        <dbReference type="EC" id="1.17.7.4"/>
    </reaction>
</comment>
<comment type="catalytic activity">
    <reaction evidence="1">
        <text>dimethylallyl diphosphate + 2 oxidized [2Fe-2S]-[ferredoxin] + H2O = (2E)-4-hydroxy-3-methylbut-2-enyl diphosphate + 2 reduced [2Fe-2S]-[ferredoxin] + 2 H(+)</text>
        <dbReference type="Rhea" id="RHEA:24825"/>
        <dbReference type="Rhea" id="RHEA-COMP:10000"/>
        <dbReference type="Rhea" id="RHEA-COMP:10001"/>
        <dbReference type="ChEBI" id="CHEBI:15377"/>
        <dbReference type="ChEBI" id="CHEBI:15378"/>
        <dbReference type="ChEBI" id="CHEBI:33737"/>
        <dbReference type="ChEBI" id="CHEBI:33738"/>
        <dbReference type="ChEBI" id="CHEBI:57623"/>
        <dbReference type="ChEBI" id="CHEBI:128753"/>
        <dbReference type="EC" id="1.17.7.4"/>
    </reaction>
</comment>
<comment type="cofactor">
    <cofactor evidence="1">
        <name>[4Fe-4S] cluster</name>
        <dbReference type="ChEBI" id="CHEBI:49883"/>
    </cofactor>
    <text evidence="1">Binds 1 [4Fe-4S] cluster per subunit.</text>
</comment>
<comment type="pathway">
    <text evidence="1">Isoprenoid biosynthesis; dimethylallyl diphosphate biosynthesis; dimethylallyl diphosphate from (2E)-4-hydroxy-3-methylbutenyl diphosphate: step 1/1.</text>
</comment>
<comment type="pathway">
    <text evidence="1">Isoprenoid biosynthesis; isopentenyl diphosphate biosynthesis via DXP pathway; isopentenyl diphosphate from 1-deoxy-D-xylulose 5-phosphate: step 6/6.</text>
</comment>
<comment type="similarity">
    <text evidence="1">Belongs to the IspH family.</text>
</comment>
<name>ISPH_CHLTE</name>
<protein>
    <recommendedName>
        <fullName evidence="1">4-hydroxy-3-methylbut-2-enyl diphosphate reductase</fullName>
        <shortName evidence="1">HMBPP reductase</shortName>
        <ecNumber evidence="1">1.17.7.4</ecNumber>
    </recommendedName>
</protein>
<organism>
    <name type="scientific">Chlorobaculum tepidum (strain ATCC 49652 / DSM 12025 / NBRC 103806 / TLS)</name>
    <name type="common">Chlorobium tepidum</name>
    <dbReference type="NCBI Taxonomy" id="194439"/>
    <lineage>
        <taxon>Bacteria</taxon>
        <taxon>Pseudomonadati</taxon>
        <taxon>Chlorobiota</taxon>
        <taxon>Chlorobiia</taxon>
        <taxon>Chlorobiales</taxon>
        <taxon>Chlorobiaceae</taxon>
        <taxon>Chlorobaculum</taxon>
    </lineage>
</organism>
<evidence type="ECO:0000255" key="1">
    <source>
        <dbReference type="HAMAP-Rule" id="MF_00191"/>
    </source>
</evidence>
<feature type="chain" id="PRO_0000128802" description="4-hydroxy-3-methylbut-2-enyl diphosphate reductase">
    <location>
        <begin position="1"/>
        <end position="332"/>
    </location>
</feature>
<feature type="active site" description="Proton donor" evidence="1">
    <location>
        <position position="127"/>
    </location>
</feature>
<feature type="binding site" evidence="1">
    <location>
        <position position="13"/>
    </location>
    <ligand>
        <name>[4Fe-4S] cluster</name>
        <dbReference type="ChEBI" id="CHEBI:49883"/>
    </ligand>
</feature>
<feature type="binding site" evidence="1">
    <location>
        <position position="41"/>
    </location>
    <ligand>
        <name>(2E)-4-hydroxy-3-methylbut-2-enyl diphosphate</name>
        <dbReference type="ChEBI" id="CHEBI:128753"/>
    </ligand>
</feature>
<feature type="binding site" evidence="1">
    <location>
        <position position="41"/>
    </location>
    <ligand>
        <name>dimethylallyl diphosphate</name>
        <dbReference type="ChEBI" id="CHEBI:57623"/>
    </ligand>
</feature>
<feature type="binding site" evidence="1">
    <location>
        <position position="41"/>
    </location>
    <ligand>
        <name>isopentenyl diphosphate</name>
        <dbReference type="ChEBI" id="CHEBI:128769"/>
    </ligand>
</feature>
<feature type="binding site" evidence="1">
    <location>
        <position position="75"/>
    </location>
    <ligand>
        <name>(2E)-4-hydroxy-3-methylbut-2-enyl diphosphate</name>
        <dbReference type="ChEBI" id="CHEBI:128753"/>
    </ligand>
</feature>
<feature type="binding site" evidence="1">
    <location>
        <position position="75"/>
    </location>
    <ligand>
        <name>dimethylallyl diphosphate</name>
        <dbReference type="ChEBI" id="CHEBI:57623"/>
    </ligand>
</feature>
<feature type="binding site" evidence="1">
    <location>
        <position position="75"/>
    </location>
    <ligand>
        <name>isopentenyl diphosphate</name>
        <dbReference type="ChEBI" id="CHEBI:128769"/>
    </ligand>
</feature>
<feature type="binding site" evidence="1">
    <location>
        <position position="97"/>
    </location>
    <ligand>
        <name>[4Fe-4S] cluster</name>
        <dbReference type="ChEBI" id="CHEBI:49883"/>
    </ligand>
</feature>
<feature type="binding site" evidence="1">
    <location>
        <position position="125"/>
    </location>
    <ligand>
        <name>(2E)-4-hydroxy-3-methylbut-2-enyl diphosphate</name>
        <dbReference type="ChEBI" id="CHEBI:128753"/>
    </ligand>
</feature>
<feature type="binding site" evidence="1">
    <location>
        <position position="125"/>
    </location>
    <ligand>
        <name>dimethylallyl diphosphate</name>
        <dbReference type="ChEBI" id="CHEBI:57623"/>
    </ligand>
</feature>
<feature type="binding site" evidence="1">
    <location>
        <position position="125"/>
    </location>
    <ligand>
        <name>isopentenyl diphosphate</name>
        <dbReference type="ChEBI" id="CHEBI:128769"/>
    </ligand>
</feature>
<feature type="binding site" evidence="1">
    <location>
        <position position="168"/>
    </location>
    <ligand>
        <name>(2E)-4-hydroxy-3-methylbut-2-enyl diphosphate</name>
        <dbReference type="ChEBI" id="CHEBI:128753"/>
    </ligand>
</feature>
<feature type="binding site" evidence="1">
    <location>
        <position position="229"/>
    </location>
    <ligand>
        <name>[4Fe-4S] cluster</name>
        <dbReference type="ChEBI" id="CHEBI:49883"/>
    </ligand>
</feature>
<feature type="binding site" evidence="1">
    <location>
        <position position="257"/>
    </location>
    <ligand>
        <name>(2E)-4-hydroxy-3-methylbut-2-enyl diphosphate</name>
        <dbReference type="ChEBI" id="CHEBI:128753"/>
    </ligand>
</feature>
<feature type="binding site" evidence="1">
    <location>
        <position position="257"/>
    </location>
    <ligand>
        <name>dimethylallyl diphosphate</name>
        <dbReference type="ChEBI" id="CHEBI:57623"/>
    </ligand>
</feature>
<feature type="binding site" evidence="1">
    <location>
        <position position="257"/>
    </location>
    <ligand>
        <name>isopentenyl diphosphate</name>
        <dbReference type="ChEBI" id="CHEBI:128769"/>
    </ligand>
</feature>
<feature type="binding site" evidence="1">
    <location>
        <position position="258"/>
    </location>
    <ligand>
        <name>(2E)-4-hydroxy-3-methylbut-2-enyl diphosphate</name>
        <dbReference type="ChEBI" id="CHEBI:128753"/>
    </ligand>
</feature>
<feature type="binding site" evidence="1">
    <location>
        <position position="258"/>
    </location>
    <ligand>
        <name>dimethylallyl diphosphate</name>
        <dbReference type="ChEBI" id="CHEBI:57623"/>
    </ligand>
</feature>
<feature type="binding site" evidence="1">
    <location>
        <position position="258"/>
    </location>
    <ligand>
        <name>isopentenyl diphosphate</name>
        <dbReference type="ChEBI" id="CHEBI:128769"/>
    </ligand>
</feature>
<feature type="binding site" evidence="1">
    <location>
        <position position="259"/>
    </location>
    <ligand>
        <name>(2E)-4-hydroxy-3-methylbut-2-enyl diphosphate</name>
        <dbReference type="ChEBI" id="CHEBI:128753"/>
    </ligand>
</feature>
<feature type="binding site" evidence="1">
    <location>
        <position position="259"/>
    </location>
    <ligand>
        <name>dimethylallyl diphosphate</name>
        <dbReference type="ChEBI" id="CHEBI:57623"/>
    </ligand>
</feature>
<feature type="binding site" evidence="1">
    <location>
        <position position="259"/>
    </location>
    <ligand>
        <name>isopentenyl diphosphate</name>
        <dbReference type="ChEBI" id="CHEBI:128769"/>
    </ligand>
</feature>
<feature type="binding site" evidence="1">
    <location>
        <position position="306"/>
    </location>
    <ligand>
        <name>(2E)-4-hydroxy-3-methylbut-2-enyl diphosphate</name>
        <dbReference type="ChEBI" id="CHEBI:128753"/>
    </ligand>
</feature>
<feature type="binding site" evidence="1">
    <location>
        <position position="306"/>
    </location>
    <ligand>
        <name>dimethylallyl diphosphate</name>
        <dbReference type="ChEBI" id="CHEBI:57623"/>
    </ligand>
</feature>
<feature type="binding site" evidence="1">
    <location>
        <position position="306"/>
    </location>
    <ligand>
        <name>isopentenyl diphosphate</name>
        <dbReference type="ChEBI" id="CHEBI:128769"/>
    </ligand>
</feature>
<accession>Q8KFN9</accession>